<comment type="function">
    <text evidence="1">Converts N-acetylmannosamine-6-phosphate (ManNAc-6-P) to N-acetylglucosamine-6-phosphate (GlcNAc-6-P).</text>
</comment>
<comment type="catalytic activity">
    <reaction evidence="1">
        <text>an N-acyl-D-glucosamine 6-phosphate = an N-acyl-D-mannosamine 6-phosphate</text>
        <dbReference type="Rhea" id="RHEA:23932"/>
        <dbReference type="ChEBI" id="CHEBI:57599"/>
        <dbReference type="ChEBI" id="CHEBI:57666"/>
        <dbReference type="EC" id="5.1.3.9"/>
    </reaction>
</comment>
<comment type="pathway">
    <text evidence="1">Amino-sugar metabolism; N-acetylneuraminate degradation; D-fructose 6-phosphate from N-acetylneuraminate: step 3/5.</text>
</comment>
<comment type="similarity">
    <text evidence="1">Belongs to the NanE family.</text>
</comment>
<proteinExistence type="inferred from homology"/>
<sequence>MKNNFFEAVKGKLIISCQALPNEPLHSSFIMARMARAAKMAGAAGIRANSVVDIQAIQDEAGLPMIGIAKTDYPDSDVFITPTLKEMRAVAATGVEVVACQVTGQRRPHDEKLAEIVQQFRTEFPNTLLMADTDTIENALEADRLGFDMIGTTMRGYTPATQGMNIADHDFEYLKELRSQVTRPIIAEGKIDTPEKLKCCLELGCHAVVVGGAITRPLEIATRFIEAIK</sequence>
<name>NANE_PEDPA</name>
<reference key="1">
    <citation type="journal article" date="2006" name="Proc. Natl. Acad. Sci. U.S.A.">
        <title>Comparative genomics of the lactic acid bacteria.</title>
        <authorList>
            <person name="Makarova K.S."/>
            <person name="Slesarev A."/>
            <person name="Wolf Y.I."/>
            <person name="Sorokin A."/>
            <person name="Mirkin B."/>
            <person name="Koonin E.V."/>
            <person name="Pavlov A."/>
            <person name="Pavlova N."/>
            <person name="Karamychev V."/>
            <person name="Polouchine N."/>
            <person name="Shakhova V."/>
            <person name="Grigoriev I."/>
            <person name="Lou Y."/>
            <person name="Rohksar D."/>
            <person name="Lucas S."/>
            <person name="Huang K."/>
            <person name="Goodstein D.M."/>
            <person name="Hawkins T."/>
            <person name="Plengvidhya V."/>
            <person name="Welker D."/>
            <person name="Hughes J."/>
            <person name="Goh Y."/>
            <person name="Benson A."/>
            <person name="Baldwin K."/>
            <person name="Lee J.-H."/>
            <person name="Diaz-Muniz I."/>
            <person name="Dosti B."/>
            <person name="Smeianov V."/>
            <person name="Wechter W."/>
            <person name="Barabote R."/>
            <person name="Lorca G."/>
            <person name="Altermann E."/>
            <person name="Barrangou R."/>
            <person name="Ganesan B."/>
            <person name="Xie Y."/>
            <person name="Rawsthorne H."/>
            <person name="Tamir D."/>
            <person name="Parker C."/>
            <person name="Breidt F."/>
            <person name="Broadbent J.R."/>
            <person name="Hutkins R."/>
            <person name="O'Sullivan D."/>
            <person name="Steele J."/>
            <person name="Unlu G."/>
            <person name="Saier M.H. Jr."/>
            <person name="Klaenhammer T."/>
            <person name="Richardson P."/>
            <person name="Kozyavkin S."/>
            <person name="Weimer B.C."/>
            <person name="Mills D.A."/>
        </authorList>
    </citation>
    <scope>NUCLEOTIDE SEQUENCE [LARGE SCALE GENOMIC DNA]</scope>
    <source>
        <strain>ATCC 25745 / CCUG 21536 / LMG 10740 / 183-1w</strain>
    </source>
</reference>
<feature type="chain" id="PRO_0000301479" description="Putative N-acetylmannosamine-6-phosphate 2-epimerase">
    <location>
        <begin position="1"/>
        <end position="229"/>
    </location>
</feature>
<dbReference type="EC" id="5.1.3.9" evidence="1"/>
<dbReference type="EMBL" id="CP000422">
    <property type="protein sequence ID" value="ABJ67259.1"/>
    <property type="molecule type" value="Genomic_DNA"/>
</dbReference>
<dbReference type="RefSeq" id="WP_011672880.1">
    <property type="nucleotide sequence ID" value="NC_008525.1"/>
</dbReference>
<dbReference type="SMR" id="Q03HR3"/>
<dbReference type="STRING" id="278197.PEPE_0152"/>
<dbReference type="GeneID" id="33062733"/>
<dbReference type="KEGG" id="ppe:PEPE_0152"/>
<dbReference type="eggNOG" id="COG3010">
    <property type="taxonomic scope" value="Bacteria"/>
</dbReference>
<dbReference type="HOGENOM" id="CLU_086300_1_0_9"/>
<dbReference type="OrthoDB" id="9781704at2"/>
<dbReference type="UniPathway" id="UPA00629">
    <property type="reaction ID" value="UER00682"/>
</dbReference>
<dbReference type="Proteomes" id="UP000000773">
    <property type="component" value="Chromosome"/>
</dbReference>
<dbReference type="GO" id="GO:0005829">
    <property type="term" value="C:cytosol"/>
    <property type="evidence" value="ECO:0007669"/>
    <property type="project" value="TreeGrafter"/>
</dbReference>
<dbReference type="GO" id="GO:0047465">
    <property type="term" value="F:N-acylglucosamine-6-phosphate 2-epimerase activity"/>
    <property type="evidence" value="ECO:0007669"/>
    <property type="project" value="UniProtKB-EC"/>
</dbReference>
<dbReference type="GO" id="GO:0005975">
    <property type="term" value="P:carbohydrate metabolic process"/>
    <property type="evidence" value="ECO:0007669"/>
    <property type="project" value="UniProtKB-UniRule"/>
</dbReference>
<dbReference type="GO" id="GO:0006053">
    <property type="term" value="P:N-acetylmannosamine catabolic process"/>
    <property type="evidence" value="ECO:0007669"/>
    <property type="project" value="TreeGrafter"/>
</dbReference>
<dbReference type="GO" id="GO:0019262">
    <property type="term" value="P:N-acetylneuraminate catabolic process"/>
    <property type="evidence" value="ECO:0007669"/>
    <property type="project" value="UniProtKB-UniRule"/>
</dbReference>
<dbReference type="CDD" id="cd04729">
    <property type="entry name" value="NanE"/>
    <property type="match status" value="1"/>
</dbReference>
<dbReference type="FunFam" id="3.20.20.70:FF:000035">
    <property type="entry name" value="Putative N-acetylmannosamine-6-phosphate 2-epimerase"/>
    <property type="match status" value="1"/>
</dbReference>
<dbReference type="Gene3D" id="3.20.20.70">
    <property type="entry name" value="Aldolase class I"/>
    <property type="match status" value="1"/>
</dbReference>
<dbReference type="HAMAP" id="MF_01235">
    <property type="entry name" value="ManNAc6P_epimer"/>
    <property type="match status" value="1"/>
</dbReference>
<dbReference type="InterPro" id="IPR013785">
    <property type="entry name" value="Aldolase_TIM"/>
</dbReference>
<dbReference type="InterPro" id="IPR007260">
    <property type="entry name" value="NanE"/>
</dbReference>
<dbReference type="InterPro" id="IPR011060">
    <property type="entry name" value="RibuloseP-bd_barrel"/>
</dbReference>
<dbReference type="NCBIfam" id="NF002231">
    <property type="entry name" value="PRK01130.1"/>
    <property type="match status" value="1"/>
</dbReference>
<dbReference type="PANTHER" id="PTHR36204">
    <property type="entry name" value="N-ACETYLMANNOSAMINE-6-PHOSPHATE 2-EPIMERASE-RELATED"/>
    <property type="match status" value="1"/>
</dbReference>
<dbReference type="PANTHER" id="PTHR36204:SF1">
    <property type="entry name" value="N-ACETYLMANNOSAMINE-6-PHOSPHATE 2-EPIMERASE-RELATED"/>
    <property type="match status" value="1"/>
</dbReference>
<dbReference type="Pfam" id="PF04131">
    <property type="entry name" value="NanE"/>
    <property type="match status" value="1"/>
</dbReference>
<dbReference type="SUPFAM" id="SSF51366">
    <property type="entry name" value="Ribulose-phoshate binding barrel"/>
    <property type="match status" value="1"/>
</dbReference>
<evidence type="ECO:0000255" key="1">
    <source>
        <dbReference type="HAMAP-Rule" id="MF_01235"/>
    </source>
</evidence>
<gene>
    <name evidence="1" type="primary">nanE</name>
    <name type="ordered locus">PEPE_0152</name>
</gene>
<accession>Q03HR3</accession>
<protein>
    <recommendedName>
        <fullName evidence="1">Putative N-acetylmannosamine-6-phosphate 2-epimerase</fullName>
        <ecNumber evidence="1">5.1.3.9</ecNumber>
    </recommendedName>
    <alternativeName>
        <fullName evidence="1">ManNAc-6-P epimerase</fullName>
    </alternativeName>
</protein>
<organism>
    <name type="scientific">Pediococcus pentosaceus (strain ATCC 25745 / CCUG 21536 / LMG 10740 / 183-1w)</name>
    <dbReference type="NCBI Taxonomy" id="278197"/>
    <lineage>
        <taxon>Bacteria</taxon>
        <taxon>Bacillati</taxon>
        <taxon>Bacillota</taxon>
        <taxon>Bacilli</taxon>
        <taxon>Lactobacillales</taxon>
        <taxon>Lactobacillaceae</taxon>
        <taxon>Pediococcus</taxon>
    </lineage>
</organism>
<keyword id="KW-0119">Carbohydrate metabolism</keyword>
<keyword id="KW-0413">Isomerase</keyword>